<name>SSRP_STRPC</name>
<sequence length="155" mass="17702">MAKGEGHILAQNKKARHDYHIVETVEAGIVLTGTEIKSVRAARIQLKDGFAQIKNGEAWLVNVHIAPFEQGNIWNADPERTRKLLLKKREITHLANELKGSGMTLAPLKVYLKDGFAKVLIGLAKGKHEYDKRETIKRRDQERDIKKQMKHYNAR</sequence>
<proteinExistence type="inferred from homology"/>
<protein>
    <recommendedName>
        <fullName evidence="1">SsrA-binding protein</fullName>
    </recommendedName>
    <alternativeName>
        <fullName evidence="1">Small protein B</fullName>
    </alternativeName>
</protein>
<keyword id="KW-0963">Cytoplasm</keyword>
<keyword id="KW-0694">RNA-binding</keyword>
<dbReference type="EMBL" id="CP000259">
    <property type="protein sequence ID" value="ABF31602.1"/>
    <property type="molecule type" value="Genomic_DNA"/>
</dbReference>
<dbReference type="RefSeq" id="WP_002990724.1">
    <property type="nucleotide sequence ID" value="NC_008021.1"/>
</dbReference>
<dbReference type="SMR" id="Q1JMZ7"/>
<dbReference type="KEGG" id="spk:MGAS9429_Spy0414"/>
<dbReference type="HOGENOM" id="CLU_108953_0_0_9"/>
<dbReference type="Proteomes" id="UP000002433">
    <property type="component" value="Chromosome"/>
</dbReference>
<dbReference type="GO" id="GO:0005829">
    <property type="term" value="C:cytosol"/>
    <property type="evidence" value="ECO:0007669"/>
    <property type="project" value="TreeGrafter"/>
</dbReference>
<dbReference type="GO" id="GO:0003723">
    <property type="term" value="F:RNA binding"/>
    <property type="evidence" value="ECO:0007669"/>
    <property type="project" value="UniProtKB-UniRule"/>
</dbReference>
<dbReference type="GO" id="GO:0070929">
    <property type="term" value="P:trans-translation"/>
    <property type="evidence" value="ECO:0007669"/>
    <property type="project" value="UniProtKB-UniRule"/>
</dbReference>
<dbReference type="CDD" id="cd09294">
    <property type="entry name" value="SmpB"/>
    <property type="match status" value="1"/>
</dbReference>
<dbReference type="Gene3D" id="2.40.280.10">
    <property type="match status" value="1"/>
</dbReference>
<dbReference type="HAMAP" id="MF_00023">
    <property type="entry name" value="SmpB"/>
    <property type="match status" value="1"/>
</dbReference>
<dbReference type="InterPro" id="IPR023620">
    <property type="entry name" value="SmpB"/>
</dbReference>
<dbReference type="InterPro" id="IPR000037">
    <property type="entry name" value="SsrA-bd_prot"/>
</dbReference>
<dbReference type="InterPro" id="IPR020081">
    <property type="entry name" value="SsrA-bd_prot_CS"/>
</dbReference>
<dbReference type="NCBIfam" id="NF003843">
    <property type="entry name" value="PRK05422.1"/>
    <property type="match status" value="1"/>
</dbReference>
<dbReference type="NCBIfam" id="TIGR00086">
    <property type="entry name" value="smpB"/>
    <property type="match status" value="1"/>
</dbReference>
<dbReference type="PANTHER" id="PTHR30308:SF2">
    <property type="entry name" value="SSRA-BINDING PROTEIN"/>
    <property type="match status" value="1"/>
</dbReference>
<dbReference type="PANTHER" id="PTHR30308">
    <property type="entry name" value="TMRNA-BINDING COMPONENT OF TRANS-TRANSLATION TAGGING COMPLEX"/>
    <property type="match status" value="1"/>
</dbReference>
<dbReference type="Pfam" id="PF01668">
    <property type="entry name" value="SmpB"/>
    <property type="match status" value="1"/>
</dbReference>
<dbReference type="SUPFAM" id="SSF74982">
    <property type="entry name" value="Small protein B (SmpB)"/>
    <property type="match status" value="1"/>
</dbReference>
<dbReference type="PROSITE" id="PS01317">
    <property type="entry name" value="SSRP"/>
    <property type="match status" value="1"/>
</dbReference>
<comment type="function">
    <text evidence="1">Required for rescue of stalled ribosomes mediated by trans-translation. Binds to transfer-messenger RNA (tmRNA), required for stable association of tmRNA with ribosomes. tmRNA and SmpB together mimic tRNA shape, replacing the anticodon stem-loop with SmpB. tmRNA is encoded by the ssrA gene; the 2 termini fold to resemble tRNA(Ala) and it encodes a 'tag peptide', a short internal open reading frame. During trans-translation Ala-aminoacylated tmRNA acts like a tRNA, entering the A-site of stalled ribosomes, displacing the stalled mRNA. The ribosome then switches to translate the ORF on the tmRNA; the nascent peptide is terminated with the 'tag peptide' encoded by the tmRNA and targeted for degradation. The ribosome is freed to recommence translation, which seems to be the essential function of trans-translation.</text>
</comment>
<comment type="subcellular location">
    <subcellularLocation>
        <location evidence="1">Cytoplasm</location>
    </subcellularLocation>
    <text evidence="1">The tmRNA-SmpB complex associates with stalled 70S ribosomes.</text>
</comment>
<comment type="similarity">
    <text evidence="1">Belongs to the SmpB family.</text>
</comment>
<accession>Q1JMZ7</accession>
<reference key="1">
    <citation type="journal article" date="2006" name="Proc. Natl. Acad. Sci. U.S.A.">
        <title>Molecular genetic anatomy of inter- and intraserotype variation in the human bacterial pathogen group A Streptococcus.</title>
        <authorList>
            <person name="Beres S.B."/>
            <person name="Richter E.W."/>
            <person name="Nagiec M.J."/>
            <person name="Sumby P."/>
            <person name="Porcella S.F."/>
            <person name="DeLeo F.R."/>
            <person name="Musser J.M."/>
        </authorList>
    </citation>
    <scope>NUCLEOTIDE SEQUENCE [LARGE SCALE GENOMIC DNA]</scope>
    <source>
        <strain>MGAS9429</strain>
    </source>
</reference>
<evidence type="ECO:0000255" key="1">
    <source>
        <dbReference type="HAMAP-Rule" id="MF_00023"/>
    </source>
</evidence>
<evidence type="ECO:0000256" key="2">
    <source>
        <dbReference type="SAM" id="MobiDB-lite"/>
    </source>
</evidence>
<gene>
    <name evidence="1" type="primary">smpB</name>
    <name type="ordered locus">MGAS9429_Spy0414</name>
</gene>
<organism>
    <name type="scientific">Streptococcus pyogenes serotype M12 (strain MGAS9429)</name>
    <dbReference type="NCBI Taxonomy" id="370551"/>
    <lineage>
        <taxon>Bacteria</taxon>
        <taxon>Bacillati</taxon>
        <taxon>Bacillota</taxon>
        <taxon>Bacilli</taxon>
        <taxon>Lactobacillales</taxon>
        <taxon>Streptococcaceae</taxon>
        <taxon>Streptococcus</taxon>
    </lineage>
</organism>
<feature type="chain" id="PRO_1000002164" description="SsrA-binding protein">
    <location>
        <begin position="1"/>
        <end position="155"/>
    </location>
</feature>
<feature type="region of interest" description="Disordered" evidence="2">
    <location>
        <begin position="135"/>
        <end position="155"/>
    </location>
</feature>
<feature type="compositionally biased region" description="Basic and acidic residues" evidence="2">
    <location>
        <begin position="135"/>
        <end position="147"/>
    </location>
</feature>